<accession>Q47WN5</accession>
<evidence type="ECO:0000255" key="1">
    <source>
        <dbReference type="HAMAP-Rule" id="MF_01175"/>
    </source>
</evidence>
<comment type="function">
    <text evidence="1">Folate-binding protein involved in regulating the level of ATP-DnaA and in the modification of some tRNAs. It is probably a key factor in regulatory networks that act via tRNA modification, such as initiation of chromosomal replication.</text>
</comment>
<comment type="subcellular location">
    <subcellularLocation>
        <location evidence="1">Cytoplasm</location>
    </subcellularLocation>
</comment>
<comment type="similarity">
    <text evidence="1">Belongs to the tRNA-modifying YgfZ family.</text>
</comment>
<gene>
    <name type="ordered locus">CPS_4132</name>
</gene>
<dbReference type="EMBL" id="CP000083">
    <property type="protein sequence ID" value="AAZ25357.1"/>
    <property type="molecule type" value="Genomic_DNA"/>
</dbReference>
<dbReference type="RefSeq" id="WP_011044868.1">
    <property type="nucleotide sequence ID" value="NC_003910.7"/>
</dbReference>
<dbReference type="SMR" id="Q47WN5"/>
<dbReference type="STRING" id="167879.CPS_4132"/>
<dbReference type="KEGG" id="cps:CPS_4132"/>
<dbReference type="HOGENOM" id="CLU_007884_6_1_6"/>
<dbReference type="Proteomes" id="UP000000547">
    <property type="component" value="Chromosome"/>
</dbReference>
<dbReference type="GO" id="GO:0005737">
    <property type="term" value="C:cytoplasm"/>
    <property type="evidence" value="ECO:0007669"/>
    <property type="project" value="UniProtKB-SubCell"/>
</dbReference>
<dbReference type="GO" id="GO:0005542">
    <property type="term" value="F:folic acid binding"/>
    <property type="evidence" value="ECO:0007669"/>
    <property type="project" value="UniProtKB-UniRule"/>
</dbReference>
<dbReference type="GO" id="GO:0016226">
    <property type="term" value="P:iron-sulfur cluster assembly"/>
    <property type="evidence" value="ECO:0007669"/>
    <property type="project" value="TreeGrafter"/>
</dbReference>
<dbReference type="GO" id="GO:0009451">
    <property type="term" value="P:RNA modification"/>
    <property type="evidence" value="ECO:0007669"/>
    <property type="project" value="InterPro"/>
</dbReference>
<dbReference type="GO" id="GO:0008033">
    <property type="term" value="P:tRNA processing"/>
    <property type="evidence" value="ECO:0007669"/>
    <property type="project" value="UniProtKB-UniRule"/>
</dbReference>
<dbReference type="Gene3D" id="2.40.30.160">
    <property type="match status" value="1"/>
</dbReference>
<dbReference type="Gene3D" id="3.30.70.1630">
    <property type="match status" value="1"/>
</dbReference>
<dbReference type="Gene3D" id="3.30.70.1400">
    <property type="entry name" value="Aminomethyltransferase beta-barrel domains"/>
    <property type="match status" value="1"/>
</dbReference>
<dbReference type="HAMAP" id="MF_01175">
    <property type="entry name" value="tRNA_modifying_YgfZ"/>
    <property type="match status" value="1"/>
</dbReference>
<dbReference type="InterPro" id="IPR006222">
    <property type="entry name" value="GCV_T_N"/>
</dbReference>
<dbReference type="InterPro" id="IPR029043">
    <property type="entry name" value="GcvT/YgfZ_C"/>
</dbReference>
<dbReference type="InterPro" id="IPR023758">
    <property type="entry name" value="tRNA-modifying_YgfZ"/>
</dbReference>
<dbReference type="InterPro" id="IPR045179">
    <property type="entry name" value="YgfZ/GcvT"/>
</dbReference>
<dbReference type="InterPro" id="IPR017703">
    <property type="entry name" value="YgfZ/GcvT_CS"/>
</dbReference>
<dbReference type="InterPro" id="IPR048451">
    <property type="entry name" value="YgfZ_barrel"/>
</dbReference>
<dbReference type="NCBIfam" id="NF007110">
    <property type="entry name" value="PRK09559.1"/>
    <property type="match status" value="1"/>
</dbReference>
<dbReference type="NCBIfam" id="TIGR03317">
    <property type="entry name" value="ygfZ_signature"/>
    <property type="match status" value="1"/>
</dbReference>
<dbReference type="PANTHER" id="PTHR22602">
    <property type="entry name" value="TRANSFERASE CAF17, MITOCHONDRIAL-RELATED"/>
    <property type="match status" value="1"/>
</dbReference>
<dbReference type="PANTHER" id="PTHR22602:SF0">
    <property type="entry name" value="TRANSFERASE CAF17, MITOCHONDRIAL-RELATED"/>
    <property type="match status" value="1"/>
</dbReference>
<dbReference type="Pfam" id="PF01571">
    <property type="entry name" value="GCV_T"/>
    <property type="match status" value="1"/>
</dbReference>
<dbReference type="Pfam" id="PF21130">
    <property type="entry name" value="YgfZ_barrel"/>
    <property type="match status" value="1"/>
</dbReference>
<dbReference type="SUPFAM" id="SSF101790">
    <property type="entry name" value="Aminomethyltransferase beta-barrel domain"/>
    <property type="match status" value="1"/>
</dbReference>
<dbReference type="SUPFAM" id="SSF103025">
    <property type="entry name" value="Folate-binding domain"/>
    <property type="match status" value="1"/>
</dbReference>
<sequence>MTITTSKQLPSLAQLPETYLIELSEFGAISLSGEEQSKYLQGQVTCDVNSITESNLLVGAHCDAKGKVFSVFRLINRSSAHLLLQPTASIEGSLKELKKFGVFAKVTIDIAEELGFIALIGKQASSLIQQEFSQVPDSLTPVVQIGSTSLVYLSGEQPRYIIIDDKATITAITEKLALPTYSQSVWNLLEITQGFPILTANTSGHYVPQMLNLQAINGISFTKGCYLGQETVARMQYLGKNKRALFCLNSQLEQPFQSDDVIEKQLGENWRKAGDILAHYQADDGSCVIQAILANDGDLPILRIASQADSVVTNQTLPYTLIAE</sequence>
<feature type="chain" id="PRO_0000262887" description="tRNA-modifying protein YgfZ">
    <location>
        <begin position="1"/>
        <end position="324"/>
    </location>
</feature>
<feature type="binding site" evidence="1">
    <location>
        <position position="186"/>
    </location>
    <ligand>
        <name>folate</name>
        <dbReference type="ChEBI" id="CHEBI:62501"/>
    </ligand>
</feature>
<proteinExistence type="inferred from homology"/>
<reference key="1">
    <citation type="journal article" date="2005" name="Proc. Natl. Acad. Sci. U.S.A.">
        <title>The psychrophilic lifestyle as revealed by the genome sequence of Colwellia psychrerythraea 34H through genomic and proteomic analyses.</title>
        <authorList>
            <person name="Methe B.A."/>
            <person name="Nelson K.E."/>
            <person name="Deming J.W."/>
            <person name="Momen B."/>
            <person name="Melamud E."/>
            <person name="Zhang X."/>
            <person name="Moult J."/>
            <person name="Madupu R."/>
            <person name="Nelson W.C."/>
            <person name="Dodson R.J."/>
            <person name="Brinkac L.M."/>
            <person name="Daugherty S.C."/>
            <person name="Durkin A.S."/>
            <person name="DeBoy R.T."/>
            <person name="Kolonay J.F."/>
            <person name="Sullivan S.A."/>
            <person name="Zhou L."/>
            <person name="Davidsen T.M."/>
            <person name="Wu M."/>
            <person name="Huston A.L."/>
            <person name="Lewis M."/>
            <person name="Weaver B."/>
            <person name="Weidman J.F."/>
            <person name="Khouri H."/>
            <person name="Utterback T.R."/>
            <person name="Feldblyum T.V."/>
            <person name="Fraser C.M."/>
        </authorList>
    </citation>
    <scope>NUCLEOTIDE SEQUENCE [LARGE SCALE GENOMIC DNA]</scope>
    <source>
        <strain>34H / ATCC BAA-681</strain>
    </source>
</reference>
<organism>
    <name type="scientific">Colwellia psychrerythraea (strain 34H / ATCC BAA-681)</name>
    <name type="common">Vibrio psychroerythus</name>
    <dbReference type="NCBI Taxonomy" id="167879"/>
    <lineage>
        <taxon>Bacteria</taxon>
        <taxon>Pseudomonadati</taxon>
        <taxon>Pseudomonadota</taxon>
        <taxon>Gammaproteobacteria</taxon>
        <taxon>Alteromonadales</taxon>
        <taxon>Colwelliaceae</taxon>
        <taxon>Colwellia</taxon>
    </lineage>
</organism>
<protein>
    <recommendedName>
        <fullName evidence="1">tRNA-modifying protein YgfZ</fullName>
    </recommendedName>
</protein>
<keyword id="KW-0963">Cytoplasm</keyword>
<keyword id="KW-0290">Folate-binding</keyword>
<keyword id="KW-0819">tRNA processing</keyword>
<name>YGFZ_COLP3</name>